<accession>B7GR11</accession>
<accession>E8MJN9</accession>
<comment type="function">
    <text evidence="1">Catalyzes the dephosphorylation of undecaprenyl diphosphate (UPP). Confers resistance to bacitracin.</text>
</comment>
<comment type="catalytic activity">
    <reaction evidence="1">
        <text>di-trans,octa-cis-undecaprenyl diphosphate + H2O = di-trans,octa-cis-undecaprenyl phosphate + phosphate + H(+)</text>
        <dbReference type="Rhea" id="RHEA:28094"/>
        <dbReference type="ChEBI" id="CHEBI:15377"/>
        <dbReference type="ChEBI" id="CHEBI:15378"/>
        <dbReference type="ChEBI" id="CHEBI:43474"/>
        <dbReference type="ChEBI" id="CHEBI:58405"/>
        <dbReference type="ChEBI" id="CHEBI:60392"/>
        <dbReference type="EC" id="3.6.1.27"/>
    </reaction>
</comment>
<comment type="subcellular location">
    <subcellularLocation>
        <location evidence="1">Cell membrane</location>
        <topology evidence="1">Multi-pass membrane protein</topology>
    </subcellularLocation>
</comment>
<comment type="miscellaneous">
    <text>Bacitracin is thought to be involved in the inhibition of peptidoglycan synthesis by sequestering undecaprenyl diphosphate, thereby reducing the pool of lipid carrier available.</text>
</comment>
<comment type="similarity">
    <text evidence="1">Belongs to the UppP family.</text>
</comment>
<sequence length="294" mass="31907">MNFFQAIILGIVQALTEYLPVSSSAHIRIFGDLMLGSDPGAAFTAIIQIGTELAVILYFRHDIINILTHWFGCLFGRNGKDWKARMGRGDEYATLGWNIIVGSIPIVILGFTLQDVIETSLRNLWITVTVLLVFGVLLWVVDAKARQNKTMDDMTYRDAFLFGLGQSMALIPGVSRSGGTITVGRALGYTREAAVRLSFLMAIPAVFGSGLLETVKAVKNYKTDAMFPGWGPTLVAMVISFVLGYIVIIGFLKFVSTFSYKAFAIYRIGLAVVVALLLIVGVLPAIDPSVAAAA</sequence>
<dbReference type="EC" id="3.6.1.27" evidence="1"/>
<dbReference type="EMBL" id="CP001095">
    <property type="protein sequence ID" value="ACJ52241.1"/>
    <property type="molecule type" value="Genomic_DNA"/>
</dbReference>
<dbReference type="EMBL" id="AP010889">
    <property type="protein sequence ID" value="BAJ68766.1"/>
    <property type="molecule type" value="Genomic_DNA"/>
</dbReference>
<dbReference type="RefSeq" id="WP_012577499.1">
    <property type="nucleotide sequence ID" value="NZ_JDTT01000050.1"/>
</dbReference>
<dbReference type="SMR" id="B7GR11"/>
<dbReference type="KEGG" id="bln:Blon_1151"/>
<dbReference type="KEGG" id="blon:BLIJ_1178"/>
<dbReference type="PATRIC" id="fig|391904.8.peg.1175"/>
<dbReference type="HOGENOM" id="CLU_060296_1_0_11"/>
<dbReference type="Proteomes" id="UP000001360">
    <property type="component" value="Chromosome"/>
</dbReference>
<dbReference type="GO" id="GO:0005886">
    <property type="term" value="C:plasma membrane"/>
    <property type="evidence" value="ECO:0007669"/>
    <property type="project" value="UniProtKB-SubCell"/>
</dbReference>
<dbReference type="GO" id="GO:0050380">
    <property type="term" value="F:undecaprenyl-diphosphatase activity"/>
    <property type="evidence" value="ECO:0007669"/>
    <property type="project" value="UniProtKB-UniRule"/>
</dbReference>
<dbReference type="GO" id="GO:0071555">
    <property type="term" value="P:cell wall organization"/>
    <property type="evidence" value="ECO:0007669"/>
    <property type="project" value="UniProtKB-KW"/>
</dbReference>
<dbReference type="GO" id="GO:0009252">
    <property type="term" value="P:peptidoglycan biosynthetic process"/>
    <property type="evidence" value="ECO:0007669"/>
    <property type="project" value="UniProtKB-KW"/>
</dbReference>
<dbReference type="GO" id="GO:0008360">
    <property type="term" value="P:regulation of cell shape"/>
    <property type="evidence" value="ECO:0007669"/>
    <property type="project" value="UniProtKB-KW"/>
</dbReference>
<dbReference type="GO" id="GO:0046677">
    <property type="term" value="P:response to antibiotic"/>
    <property type="evidence" value="ECO:0007669"/>
    <property type="project" value="UniProtKB-UniRule"/>
</dbReference>
<dbReference type="HAMAP" id="MF_01006">
    <property type="entry name" value="Undec_diphosphatase"/>
    <property type="match status" value="1"/>
</dbReference>
<dbReference type="InterPro" id="IPR003824">
    <property type="entry name" value="UppP"/>
</dbReference>
<dbReference type="NCBIfam" id="NF001392">
    <property type="entry name" value="PRK00281.2-1"/>
    <property type="match status" value="1"/>
</dbReference>
<dbReference type="NCBIfam" id="TIGR00753">
    <property type="entry name" value="undec_PP_bacA"/>
    <property type="match status" value="1"/>
</dbReference>
<dbReference type="PANTHER" id="PTHR30622">
    <property type="entry name" value="UNDECAPRENYL-DIPHOSPHATASE"/>
    <property type="match status" value="1"/>
</dbReference>
<dbReference type="PANTHER" id="PTHR30622:SF4">
    <property type="entry name" value="UNDECAPRENYL-DIPHOSPHATASE"/>
    <property type="match status" value="1"/>
</dbReference>
<dbReference type="Pfam" id="PF02673">
    <property type="entry name" value="BacA"/>
    <property type="match status" value="1"/>
</dbReference>
<gene>
    <name evidence="1" type="primary">uppP</name>
    <name type="ordered locus">Blon_1151</name>
    <name type="ordered locus">BLIJ_1178</name>
</gene>
<protein>
    <recommendedName>
        <fullName evidence="1">Undecaprenyl-diphosphatase</fullName>
        <ecNumber evidence="1">3.6.1.27</ecNumber>
    </recommendedName>
    <alternativeName>
        <fullName evidence="1">Bacitracin resistance protein</fullName>
    </alternativeName>
    <alternativeName>
        <fullName evidence="1">Undecaprenyl pyrophosphate phosphatase</fullName>
    </alternativeName>
</protein>
<name>UPPP_BIFLS</name>
<keyword id="KW-0046">Antibiotic resistance</keyword>
<keyword id="KW-1003">Cell membrane</keyword>
<keyword id="KW-0133">Cell shape</keyword>
<keyword id="KW-0961">Cell wall biogenesis/degradation</keyword>
<keyword id="KW-0378">Hydrolase</keyword>
<keyword id="KW-0472">Membrane</keyword>
<keyword id="KW-0573">Peptidoglycan synthesis</keyword>
<keyword id="KW-0812">Transmembrane</keyword>
<keyword id="KW-1133">Transmembrane helix</keyword>
<organism>
    <name type="scientific">Bifidobacterium longum subsp. infantis (strain ATCC 15697 / DSM 20088 / JCM 1222 / NCTC 11817 / S12)</name>
    <dbReference type="NCBI Taxonomy" id="391904"/>
    <lineage>
        <taxon>Bacteria</taxon>
        <taxon>Bacillati</taxon>
        <taxon>Actinomycetota</taxon>
        <taxon>Actinomycetes</taxon>
        <taxon>Bifidobacteriales</taxon>
        <taxon>Bifidobacteriaceae</taxon>
        <taxon>Bifidobacterium</taxon>
    </lineage>
</organism>
<feature type="chain" id="PRO_1000148802" description="Undecaprenyl-diphosphatase">
    <location>
        <begin position="1"/>
        <end position="294"/>
    </location>
</feature>
<feature type="transmembrane region" description="Helical" evidence="1">
    <location>
        <begin position="39"/>
        <end position="59"/>
    </location>
</feature>
<feature type="transmembrane region" description="Helical" evidence="1">
    <location>
        <begin position="93"/>
        <end position="113"/>
    </location>
</feature>
<feature type="transmembrane region" description="Helical" evidence="1">
    <location>
        <begin position="123"/>
        <end position="143"/>
    </location>
</feature>
<feature type="transmembrane region" description="Helical" evidence="1">
    <location>
        <begin position="198"/>
        <end position="218"/>
    </location>
</feature>
<feature type="transmembrane region" description="Helical" evidence="1">
    <location>
        <begin position="232"/>
        <end position="252"/>
    </location>
</feature>
<feature type="transmembrane region" description="Helical" evidence="1">
    <location>
        <begin position="268"/>
        <end position="288"/>
    </location>
</feature>
<proteinExistence type="inferred from homology"/>
<reference key="1">
    <citation type="journal article" date="2008" name="Proc. Natl. Acad. Sci. U.S.A.">
        <title>The genome sequence of Bifidobacterium longum subsp. infantis reveals adaptations for milk utilization within the infant microbiome.</title>
        <authorList>
            <person name="Sela D.A."/>
            <person name="Chapman J."/>
            <person name="Adeuya A."/>
            <person name="Kim J.H."/>
            <person name="Chen F."/>
            <person name="Whitehead T.R."/>
            <person name="Lapidus A."/>
            <person name="Rokhsar D.S."/>
            <person name="Lebrilla C.B."/>
            <person name="German J.B."/>
            <person name="Price N.P."/>
            <person name="Richardson P.M."/>
            <person name="Mills D.A."/>
        </authorList>
    </citation>
    <scope>NUCLEOTIDE SEQUENCE [LARGE SCALE GENOMIC DNA]</scope>
    <source>
        <strain>ATCC 15697 / DSM 20088 / JCM 1222 / NCTC 11817 / S12</strain>
    </source>
</reference>
<reference key="2">
    <citation type="journal article" date="2011" name="Nature">
        <title>Bifidobacteria can protect from enteropathogenic infection through production of acetate.</title>
        <authorList>
            <person name="Fukuda S."/>
            <person name="Toh H."/>
            <person name="Hase K."/>
            <person name="Oshima K."/>
            <person name="Nakanishi Y."/>
            <person name="Yoshimura K."/>
            <person name="Tobe T."/>
            <person name="Clarke J.M."/>
            <person name="Topping D.L."/>
            <person name="Suzuki T."/>
            <person name="Taylor T.D."/>
            <person name="Itoh K."/>
            <person name="Kikuchi J."/>
            <person name="Morita H."/>
            <person name="Hattori M."/>
            <person name="Ohno H."/>
        </authorList>
    </citation>
    <scope>NUCLEOTIDE SEQUENCE [LARGE SCALE GENOMIC DNA]</scope>
    <source>
        <strain>ATCC 15697 / DSM 20088 / JCM 1222 / NCTC 11817 / S12</strain>
    </source>
</reference>
<evidence type="ECO:0000255" key="1">
    <source>
        <dbReference type="HAMAP-Rule" id="MF_01006"/>
    </source>
</evidence>